<organism>
    <name type="scientific">Lysinibacillus sphaericus (strain C3-41)</name>
    <dbReference type="NCBI Taxonomy" id="444177"/>
    <lineage>
        <taxon>Bacteria</taxon>
        <taxon>Bacillati</taxon>
        <taxon>Bacillota</taxon>
        <taxon>Bacilli</taxon>
        <taxon>Bacillales</taxon>
        <taxon>Bacillaceae</taxon>
        <taxon>Lysinibacillus</taxon>
    </lineage>
</organism>
<evidence type="ECO:0000255" key="1">
    <source>
        <dbReference type="HAMAP-Rule" id="MF_01420"/>
    </source>
</evidence>
<evidence type="ECO:0000305" key="2"/>
<keyword id="KW-0131">Cell cycle</keyword>
<keyword id="KW-0132">Cell division</keyword>
<keyword id="KW-0238">DNA-binding</keyword>
<proteinExistence type="inferred from homology"/>
<reference key="1">
    <citation type="journal article" date="2008" name="J. Bacteriol.">
        <title>Complete genome sequence of the mosquitocidal bacterium Bacillus sphaericus C3-41 and comparison with those of closely related Bacillus species.</title>
        <authorList>
            <person name="Hu X."/>
            <person name="Fan W."/>
            <person name="Han B."/>
            <person name="Liu H."/>
            <person name="Zheng D."/>
            <person name="Li Q."/>
            <person name="Dong W."/>
            <person name="Yan J."/>
            <person name="Gao M."/>
            <person name="Berry C."/>
            <person name="Yuan Z."/>
        </authorList>
    </citation>
    <scope>NUCLEOTIDE SEQUENCE [LARGE SCALE GENOMIC DNA]</scope>
    <source>
        <strain>C3-41</strain>
    </source>
</reference>
<protein>
    <recommendedName>
        <fullName evidence="1">Probable cell division protein WhiA</fullName>
    </recommendedName>
</protein>
<comment type="function">
    <text evidence="1">Involved in cell division and chromosome segregation.</text>
</comment>
<comment type="similarity">
    <text evidence="1">Belongs to the WhiA family.</text>
</comment>
<comment type="sequence caution" evidence="2">
    <conflict type="erroneous initiation">
        <sequence resource="EMBL-CDS" id="ACA38077"/>
    </conflict>
</comment>
<name>WHIA_LYSSC</name>
<dbReference type="EMBL" id="CP000817">
    <property type="protein sequence ID" value="ACA38077.1"/>
    <property type="status" value="ALT_INIT"/>
    <property type="molecule type" value="Genomic_DNA"/>
</dbReference>
<dbReference type="RefSeq" id="WP_008173244.1">
    <property type="nucleotide sequence ID" value="NC_010382.1"/>
</dbReference>
<dbReference type="SMR" id="B1HVQ8"/>
<dbReference type="EnsemblBacteria" id="ACA38077">
    <property type="protein sequence ID" value="ACA38077"/>
    <property type="gene ID" value="Bsph_0450"/>
</dbReference>
<dbReference type="GeneID" id="29441874"/>
<dbReference type="KEGG" id="lsp:Bsph_0450"/>
<dbReference type="HOGENOM" id="CLU_053282_0_0_9"/>
<dbReference type="Proteomes" id="UP000002164">
    <property type="component" value="Chromosome"/>
</dbReference>
<dbReference type="GO" id="GO:0003677">
    <property type="term" value="F:DNA binding"/>
    <property type="evidence" value="ECO:0007669"/>
    <property type="project" value="UniProtKB-UniRule"/>
</dbReference>
<dbReference type="GO" id="GO:0051301">
    <property type="term" value="P:cell division"/>
    <property type="evidence" value="ECO:0007669"/>
    <property type="project" value="UniProtKB-UniRule"/>
</dbReference>
<dbReference type="GO" id="GO:0043937">
    <property type="term" value="P:regulation of sporulation"/>
    <property type="evidence" value="ECO:0007669"/>
    <property type="project" value="InterPro"/>
</dbReference>
<dbReference type="FunFam" id="3.10.28.10:FF:000002">
    <property type="entry name" value="Probable cell division protein WhiA"/>
    <property type="match status" value="1"/>
</dbReference>
<dbReference type="Gene3D" id="3.10.28.10">
    <property type="entry name" value="Homing endonucleases"/>
    <property type="match status" value="1"/>
</dbReference>
<dbReference type="HAMAP" id="MF_01420">
    <property type="entry name" value="HTH_type_WhiA"/>
    <property type="match status" value="1"/>
</dbReference>
<dbReference type="InterPro" id="IPR027434">
    <property type="entry name" value="Homing_endonucl"/>
</dbReference>
<dbReference type="InterPro" id="IPR018478">
    <property type="entry name" value="Sporu_reg_WhiA_N_dom"/>
</dbReference>
<dbReference type="InterPro" id="IPR003802">
    <property type="entry name" value="Sporulation_regulator_WhiA"/>
</dbReference>
<dbReference type="InterPro" id="IPR023054">
    <property type="entry name" value="Sporulation_regulator_WhiA_C"/>
</dbReference>
<dbReference type="InterPro" id="IPR039518">
    <property type="entry name" value="WhiA_LAGLIDADG_dom"/>
</dbReference>
<dbReference type="NCBIfam" id="TIGR00647">
    <property type="entry name" value="DNA_bind_WhiA"/>
    <property type="match status" value="1"/>
</dbReference>
<dbReference type="PANTHER" id="PTHR37307">
    <property type="entry name" value="CELL DIVISION PROTEIN WHIA-RELATED"/>
    <property type="match status" value="1"/>
</dbReference>
<dbReference type="PANTHER" id="PTHR37307:SF1">
    <property type="entry name" value="CELL DIVISION PROTEIN WHIA-RELATED"/>
    <property type="match status" value="1"/>
</dbReference>
<dbReference type="Pfam" id="PF02650">
    <property type="entry name" value="HTH_WhiA"/>
    <property type="match status" value="1"/>
</dbReference>
<dbReference type="Pfam" id="PF14527">
    <property type="entry name" value="LAGLIDADG_WhiA"/>
    <property type="match status" value="1"/>
</dbReference>
<dbReference type="Pfam" id="PF10298">
    <property type="entry name" value="WhiA_N"/>
    <property type="match status" value="1"/>
</dbReference>
<dbReference type="SUPFAM" id="SSF55608">
    <property type="entry name" value="Homing endonucleases"/>
    <property type="match status" value="1"/>
</dbReference>
<accession>B1HVQ8</accession>
<feature type="chain" id="PRO_0000376519" description="Probable cell division protein WhiA">
    <location>
        <begin position="1"/>
        <end position="315"/>
    </location>
</feature>
<feature type="DNA-binding region" description="H-T-H motif" evidence="1">
    <location>
        <begin position="275"/>
        <end position="309"/>
    </location>
</feature>
<gene>
    <name evidence="1" type="primary">whiA</name>
    <name type="ordered locus">Bsph_0450</name>
</gene>
<sequence length="315" mass="36062">MSFASETKKELTQIEADNHCMKAEVSALIRMNGSLSFANKQLSLDVQTENAAIARRLYTIMKKLYPYNVELLVRKKMRLKKNNVYICRVREGARELLIDLEIISDDFQFNHTISRKLIKKNGQKRAYLRGAFLAGGSVNNPETSAYHLEIYSLYKEHGEALMDLMNEFELNAKTIERKKGFVTYLKEAEKISDFLNIVGAHQAMMKFEDVRILRDMRNSVNRIVNCETANLNKTIGAALRQVENIRFIENSIGLDQLPEKLREIARLRVEYQDVTLKELGEMVSSGTVSKSGVNHRLRKIDEIADALRRGEKIGG</sequence>